<protein>
    <recommendedName>
        <fullName evidence="1">Ketol-acid reductoisomerase (NADP(+))</fullName>
        <shortName evidence="1">KARI</shortName>
        <ecNumber evidence="1">1.1.1.86</ecNumber>
    </recommendedName>
    <alternativeName>
        <fullName evidence="1">Acetohydroxy-acid isomeroreductase</fullName>
        <shortName evidence="1">AHIR</shortName>
    </alternativeName>
    <alternativeName>
        <fullName evidence="1">Alpha-keto-beta-hydroxylacyl reductoisomerase</fullName>
    </alternativeName>
    <alternativeName>
        <fullName evidence="1">Ketol-acid reductoisomerase type 1</fullName>
    </alternativeName>
    <alternativeName>
        <fullName evidence="1">Ketol-acid reductoisomerase type I</fullName>
    </alternativeName>
</protein>
<accession>Q7VZU4</accession>
<organism>
    <name type="scientific">Bordetella pertussis (strain Tohama I / ATCC BAA-589 / NCTC 13251)</name>
    <dbReference type="NCBI Taxonomy" id="257313"/>
    <lineage>
        <taxon>Bacteria</taxon>
        <taxon>Pseudomonadati</taxon>
        <taxon>Pseudomonadota</taxon>
        <taxon>Betaproteobacteria</taxon>
        <taxon>Burkholderiales</taxon>
        <taxon>Alcaligenaceae</taxon>
        <taxon>Bordetella</taxon>
    </lineage>
</organism>
<proteinExistence type="inferred from homology"/>
<keyword id="KW-0028">Amino-acid biosynthesis</keyword>
<keyword id="KW-0100">Branched-chain amino acid biosynthesis</keyword>
<keyword id="KW-0460">Magnesium</keyword>
<keyword id="KW-0479">Metal-binding</keyword>
<keyword id="KW-0521">NADP</keyword>
<keyword id="KW-0560">Oxidoreductase</keyword>
<keyword id="KW-1185">Reference proteome</keyword>
<dbReference type="EC" id="1.1.1.86" evidence="1"/>
<dbReference type="EMBL" id="BX640413">
    <property type="protein sequence ID" value="CAE41096.1"/>
    <property type="molecule type" value="Genomic_DNA"/>
</dbReference>
<dbReference type="RefSeq" id="NP_879606.1">
    <property type="nucleotide sequence ID" value="NC_002929.2"/>
</dbReference>
<dbReference type="RefSeq" id="WP_010930015.1">
    <property type="nucleotide sequence ID" value="NZ_CP039022.1"/>
</dbReference>
<dbReference type="SMR" id="Q7VZU4"/>
<dbReference type="STRING" id="257313.BP0791"/>
<dbReference type="PaxDb" id="257313-BP0791"/>
<dbReference type="GeneID" id="69600818"/>
<dbReference type="KEGG" id="bpe:BP0791"/>
<dbReference type="PATRIC" id="fig|257313.5.peg.842"/>
<dbReference type="eggNOG" id="COG0059">
    <property type="taxonomic scope" value="Bacteria"/>
</dbReference>
<dbReference type="HOGENOM" id="CLU_033821_0_1_4"/>
<dbReference type="UniPathway" id="UPA00047">
    <property type="reaction ID" value="UER00056"/>
</dbReference>
<dbReference type="UniPathway" id="UPA00049">
    <property type="reaction ID" value="UER00060"/>
</dbReference>
<dbReference type="Proteomes" id="UP000002676">
    <property type="component" value="Chromosome"/>
</dbReference>
<dbReference type="GO" id="GO:0005829">
    <property type="term" value="C:cytosol"/>
    <property type="evidence" value="ECO:0007669"/>
    <property type="project" value="TreeGrafter"/>
</dbReference>
<dbReference type="GO" id="GO:0004455">
    <property type="term" value="F:ketol-acid reductoisomerase activity"/>
    <property type="evidence" value="ECO:0007669"/>
    <property type="project" value="UniProtKB-UniRule"/>
</dbReference>
<dbReference type="GO" id="GO:0000287">
    <property type="term" value="F:magnesium ion binding"/>
    <property type="evidence" value="ECO:0007669"/>
    <property type="project" value="UniProtKB-UniRule"/>
</dbReference>
<dbReference type="GO" id="GO:0050661">
    <property type="term" value="F:NADP binding"/>
    <property type="evidence" value="ECO:0007669"/>
    <property type="project" value="InterPro"/>
</dbReference>
<dbReference type="GO" id="GO:0009097">
    <property type="term" value="P:isoleucine biosynthetic process"/>
    <property type="evidence" value="ECO:0007669"/>
    <property type="project" value="UniProtKB-UniRule"/>
</dbReference>
<dbReference type="GO" id="GO:0009099">
    <property type="term" value="P:L-valine biosynthetic process"/>
    <property type="evidence" value="ECO:0007669"/>
    <property type="project" value="UniProtKB-UniRule"/>
</dbReference>
<dbReference type="FunFam" id="3.40.50.720:FF:000023">
    <property type="entry name" value="Ketol-acid reductoisomerase (NADP(+))"/>
    <property type="match status" value="1"/>
</dbReference>
<dbReference type="Gene3D" id="6.10.240.10">
    <property type="match status" value="1"/>
</dbReference>
<dbReference type="Gene3D" id="3.40.50.720">
    <property type="entry name" value="NAD(P)-binding Rossmann-like Domain"/>
    <property type="match status" value="1"/>
</dbReference>
<dbReference type="HAMAP" id="MF_00435">
    <property type="entry name" value="IlvC"/>
    <property type="match status" value="1"/>
</dbReference>
<dbReference type="InterPro" id="IPR008927">
    <property type="entry name" value="6-PGluconate_DH-like_C_sf"/>
</dbReference>
<dbReference type="InterPro" id="IPR013023">
    <property type="entry name" value="KARI"/>
</dbReference>
<dbReference type="InterPro" id="IPR000506">
    <property type="entry name" value="KARI_C"/>
</dbReference>
<dbReference type="InterPro" id="IPR013116">
    <property type="entry name" value="KARI_N"/>
</dbReference>
<dbReference type="InterPro" id="IPR014359">
    <property type="entry name" value="KARI_prok"/>
</dbReference>
<dbReference type="InterPro" id="IPR036291">
    <property type="entry name" value="NAD(P)-bd_dom_sf"/>
</dbReference>
<dbReference type="NCBIfam" id="TIGR00465">
    <property type="entry name" value="ilvC"/>
    <property type="match status" value="1"/>
</dbReference>
<dbReference type="NCBIfam" id="NF004017">
    <property type="entry name" value="PRK05479.1"/>
    <property type="match status" value="1"/>
</dbReference>
<dbReference type="NCBIfam" id="NF009940">
    <property type="entry name" value="PRK13403.1"/>
    <property type="match status" value="1"/>
</dbReference>
<dbReference type="PANTHER" id="PTHR21371">
    <property type="entry name" value="KETOL-ACID REDUCTOISOMERASE, MITOCHONDRIAL"/>
    <property type="match status" value="1"/>
</dbReference>
<dbReference type="PANTHER" id="PTHR21371:SF1">
    <property type="entry name" value="KETOL-ACID REDUCTOISOMERASE, MITOCHONDRIAL"/>
    <property type="match status" value="1"/>
</dbReference>
<dbReference type="Pfam" id="PF01450">
    <property type="entry name" value="KARI_C"/>
    <property type="match status" value="1"/>
</dbReference>
<dbReference type="Pfam" id="PF07991">
    <property type="entry name" value="KARI_N"/>
    <property type="match status" value="1"/>
</dbReference>
<dbReference type="PIRSF" id="PIRSF000116">
    <property type="entry name" value="IlvC_gammaproteo"/>
    <property type="match status" value="1"/>
</dbReference>
<dbReference type="SUPFAM" id="SSF48179">
    <property type="entry name" value="6-phosphogluconate dehydrogenase C-terminal domain-like"/>
    <property type="match status" value="1"/>
</dbReference>
<dbReference type="SUPFAM" id="SSF51735">
    <property type="entry name" value="NAD(P)-binding Rossmann-fold domains"/>
    <property type="match status" value="1"/>
</dbReference>
<dbReference type="PROSITE" id="PS51851">
    <property type="entry name" value="KARI_C"/>
    <property type="match status" value="1"/>
</dbReference>
<dbReference type="PROSITE" id="PS51850">
    <property type="entry name" value="KARI_N"/>
    <property type="match status" value="1"/>
</dbReference>
<gene>
    <name evidence="1" type="primary">ilvC</name>
    <name type="ordered locus">BP0791</name>
</gene>
<name>ILVC_BORPE</name>
<feature type="chain" id="PRO_0000151282" description="Ketol-acid reductoisomerase (NADP(+))">
    <location>
        <begin position="1"/>
        <end position="338"/>
    </location>
</feature>
<feature type="domain" description="KARI N-terminal Rossmann" evidence="2">
    <location>
        <begin position="1"/>
        <end position="181"/>
    </location>
</feature>
<feature type="domain" description="KARI C-terminal knotted" evidence="3">
    <location>
        <begin position="182"/>
        <end position="327"/>
    </location>
</feature>
<feature type="active site" evidence="1">
    <location>
        <position position="107"/>
    </location>
</feature>
<feature type="binding site" evidence="1">
    <location>
        <begin position="24"/>
        <end position="27"/>
    </location>
    <ligand>
        <name>NADP(+)</name>
        <dbReference type="ChEBI" id="CHEBI:58349"/>
    </ligand>
</feature>
<feature type="binding site" evidence="1">
    <location>
        <position position="47"/>
    </location>
    <ligand>
        <name>NADP(+)</name>
        <dbReference type="ChEBI" id="CHEBI:58349"/>
    </ligand>
</feature>
<feature type="binding site" evidence="1">
    <location>
        <position position="52"/>
    </location>
    <ligand>
        <name>NADP(+)</name>
        <dbReference type="ChEBI" id="CHEBI:58349"/>
    </ligand>
</feature>
<feature type="binding site" evidence="1">
    <location>
        <position position="133"/>
    </location>
    <ligand>
        <name>NADP(+)</name>
        <dbReference type="ChEBI" id="CHEBI:58349"/>
    </ligand>
</feature>
<feature type="binding site" evidence="1">
    <location>
        <position position="190"/>
    </location>
    <ligand>
        <name>Mg(2+)</name>
        <dbReference type="ChEBI" id="CHEBI:18420"/>
        <label>1</label>
    </ligand>
</feature>
<feature type="binding site" evidence="1">
    <location>
        <position position="190"/>
    </location>
    <ligand>
        <name>Mg(2+)</name>
        <dbReference type="ChEBI" id="CHEBI:18420"/>
        <label>2</label>
    </ligand>
</feature>
<feature type="binding site" evidence="1">
    <location>
        <position position="194"/>
    </location>
    <ligand>
        <name>Mg(2+)</name>
        <dbReference type="ChEBI" id="CHEBI:18420"/>
        <label>1</label>
    </ligand>
</feature>
<feature type="binding site" evidence="1">
    <location>
        <position position="226"/>
    </location>
    <ligand>
        <name>Mg(2+)</name>
        <dbReference type="ChEBI" id="CHEBI:18420"/>
        <label>2</label>
    </ligand>
</feature>
<feature type="binding site" evidence="1">
    <location>
        <position position="230"/>
    </location>
    <ligand>
        <name>Mg(2+)</name>
        <dbReference type="ChEBI" id="CHEBI:18420"/>
        <label>2</label>
    </ligand>
</feature>
<feature type="binding site" evidence="1">
    <location>
        <position position="251"/>
    </location>
    <ligand>
        <name>substrate</name>
    </ligand>
</feature>
<evidence type="ECO:0000255" key="1">
    <source>
        <dbReference type="HAMAP-Rule" id="MF_00435"/>
    </source>
</evidence>
<evidence type="ECO:0000255" key="2">
    <source>
        <dbReference type="PROSITE-ProRule" id="PRU01197"/>
    </source>
</evidence>
<evidence type="ECO:0000255" key="3">
    <source>
        <dbReference type="PROSITE-ProRule" id="PRU01198"/>
    </source>
</evidence>
<reference key="1">
    <citation type="journal article" date="2003" name="Nat. Genet.">
        <title>Comparative analysis of the genome sequences of Bordetella pertussis, Bordetella parapertussis and Bordetella bronchiseptica.</title>
        <authorList>
            <person name="Parkhill J."/>
            <person name="Sebaihia M."/>
            <person name="Preston A."/>
            <person name="Murphy L.D."/>
            <person name="Thomson N.R."/>
            <person name="Harris D.E."/>
            <person name="Holden M.T.G."/>
            <person name="Churcher C.M."/>
            <person name="Bentley S.D."/>
            <person name="Mungall K.L."/>
            <person name="Cerdeno-Tarraga A.-M."/>
            <person name="Temple L."/>
            <person name="James K.D."/>
            <person name="Harris B."/>
            <person name="Quail M.A."/>
            <person name="Achtman M."/>
            <person name="Atkin R."/>
            <person name="Baker S."/>
            <person name="Basham D."/>
            <person name="Bason N."/>
            <person name="Cherevach I."/>
            <person name="Chillingworth T."/>
            <person name="Collins M."/>
            <person name="Cronin A."/>
            <person name="Davis P."/>
            <person name="Doggett J."/>
            <person name="Feltwell T."/>
            <person name="Goble A."/>
            <person name="Hamlin N."/>
            <person name="Hauser H."/>
            <person name="Holroyd S."/>
            <person name="Jagels K."/>
            <person name="Leather S."/>
            <person name="Moule S."/>
            <person name="Norberczak H."/>
            <person name="O'Neil S."/>
            <person name="Ormond D."/>
            <person name="Price C."/>
            <person name="Rabbinowitsch E."/>
            <person name="Rutter S."/>
            <person name="Sanders M."/>
            <person name="Saunders D."/>
            <person name="Seeger K."/>
            <person name="Sharp S."/>
            <person name="Simmonds M."/>
            <person name="Skelton J."/>
            <person name="Squares R."/>
            <person name="Squares S."/>
            <person name="Stevens K."/>
            <person name="Unwin L."/>
            <person name="Whitehead S."/>
            <person name="Barrell B.G."/>
            <person name="Maskell D.J."/>
        </authorList>
    </citation>
    <scope>NUCLEOTIDE SEQUENCE [LARGE SCALE GENOMIC DNA]</scope>
    <source>
        <strain>Tohama I / ATCC BAA-589 / NCTC 13251</strain>
    </source>
</reference>
<sequence length="338" mass="36206">MKVFYDKDCDLSLVKGKTVAIIGYGSQGHAHALNLHDSGVKVVVGLRKGGASWNKAANAGLEVAEVAEAVKRADIVMMLLPDENIAAVYRDEVHANIKAGAALAFAHGFNVHYGQVVPREDIDVIMAAPKAPGHTVRSTYSQGGGVPHLIAVYQDKSGSARDVALSYASANGGGRAGIIETNFREETETDLFGEQAVLCGGTVELIKAGFDTLVEAGYAPEMAYFECLHELKLIVDLIYEGGIANMNYSISNNAEFGEYETGPKVVTDATRQAMRECLTAIQTGEYAKKFILENAAGAPTLTSRRRINAESQIEQVGGKLRAMMPWIAANKLVDKAKN</sequence>
<comment type="function">
    <text evidence="1">Involved in the biosynthesis of branched-chain amino acids (BCAA). Catalyzes an alkyl-migration followed by a ketol-acid reduction of (S)-2-acetolactate (S2AL) to yield (R)-2,3-dihydroxy-isovalerate. In the isomerase reaction, S2AL is rearranged via a Mg-dependent methyl migration to produce 3-hydroxy-3-methyl-2-ketobutyrate (HMKB). In the reductase reaction, this 2-ketoacid undergoes a metal-dependent reduction by NADPH to yield (R)-2,3-dihydroxy-isovalerate.</text>
</comment>
<comment type="catalytic activity">
    <reaction evidence="1">
        <text>(2R)-2,3-dihydroxy-3-methylbutanoate + NADP(+) = (2S)-2-acetolactate + NADPH + H(+)</text>
        <dbReference type="Rhea" id="RHEA:22068"/>
        <dbReference type="ChEBI" id="CHEBI:15378"/>
        <dbReference type="ChEBI" id="CHEBI:49072"/>
        <dbReference type="ChEBI" id="CHEBI:57783"/>
        <dbReference type="ChEBI" id="CHEBI:58349"/>
        <dbReference type="ChEBI" id="CHEBI:58476"/>
        <dbReference type="EC" id="1.1.1.86"/>
    </reaction>
</comment>
<comment type="catalytic activity">
    <reaction evidence="1">
        <text>(2R,3R)-2,3-dihydroxy-3-methylpentanoate + NADP(+) = (S)-2-ethyl-2-hydroxy-3-oxobutanoate + NADPH + H(+)</text>
        <dbReference type="Rhea" id="RHEA:13493"/>
        <dbReference type="ChEBI" id="CHEBI:15378"/>
        <dbReference type="ChEBI" id="CHEBI:49256"/>
        <dbReference type="ChEBI" id="CHEBI:49258"/>
        <dbReference type="ChEBI" id="CHEBI:57783"/>
        <dbReference type="ChEBI" id="CHEBI:58349"/>
        <dbReference type="EC" id="1.1.1.86"/>
    </reaction>
</comment>
<comment type="cofactor">
    <cofactor evidence="1">
        <name>Mg(2+)</name>
        <dbReference type="ChEBI" id="CHEBI:18420"/>
    </cofactor>
    <text evidence="1">Binds 2 magnesium ions per subunit.</text>
</comment>
<comment type="pathway">
    <text evidence="1">Amino-acid biosynthesis; L-isoleucine biosynthesis; L-isoleucine from 2-oxobutanoate: step 2/4.</text>
</comment>
<comment type="pathway">
    <text evidence="1">Amino-acid biosynthesis; L-valine biosynthesis; L-valine from pyruvate: step 2/4.</text>
</comment>
<comment type="similarity">
    <text evidence="1">Belongs to the ketol-acid reductoisomerase family.</text>
</comment>